<comment type="caution">
    <text evidence="1">Product of a dubious CDS prediction. May be a non-coding RNA. No experimental confirmation available.</text>
</comment>
<evidence type="ECO:0000305" key="1"/>
<protein>
    <recommendedName>
        <fullName>Down syndrome critical region protein 10</fullName>
    </recommendedName>
</protein>
<name>DSC10_PANTR</name>
<proteinExistence type="uncertain"/>
<dbReference type="Ensembl" id="ENSPTRT00000081647.1">
    <property type="protein sequence ID" value="ENSPTRP00000071387.1"/>
    <property type="gene ID" value="ENSPTRG00000052552.1"/>
</dbReference>
<dbReference type="GeneTree" id="ENSGT00910000147022"/>
<dbReference type="InParanoid" id="P59023"/>
<dbReference type="OMA" id="CALMWTC"/>
<dbReference type="Proteomes" id="UP000002277">
    <property type="component" value="Chromosome 21"/>
</dbReference>
<dbReference type="Bgee" id="ENSPTRG00000052552">
    <property type="expression patterns" value="Expressed in testis"/>
</dbReference>
<feature type="chain" id="PRO_0000080017" description="Down syndrome critical region protein 10">
    <location>
        <begin position="1"/>
        <end position="87"/>
    </location>
</feature>
<reference key="1">
    <citation type="journal article" date="2002" name="DNA Res.">
        <title>Identification of two novel primate-specific genes in DSCR.</title>
        <authorList>
            <person name="Takamatsu K."/>
            <person name="Maekawa K."/>
            <person name="Togashi T."/>
            <person name="Choi D.K."/>
            <person name="Suzuki Y."/>
            <person name="Taylor T.D."/>
            <person name="Toyoda A."/>
            <person name="Sugano S."/>
            <person name="Fujiyama A."/>
            <person name="Hattori M."/>
            <person name="Sakaki Y."/>
            <person name="Takeda T."/>
        </authorList>
    </citation>
    <scope>NUCLEOTIDE SEQUENCE [GENOMIC DNA]</scope>
</reference>
<gene>
    <name type="primary">DSCR10</name>
</gene>
<keyword id="KW-1185">Reference proteome</keyword>
<sequence length="87" mass="9225">MQIVQGFPADAPLCALMWTCSFLLPGLQTETPYPCTSLCLSSSQSAHPPLPVRVFSAESGYGIPFCAEPCSHVTVCHLQAGPVCMPV</sequence>
<accession>P59023</accession>
<organism>
    <name type="scientific">Pan troglodytes</name>
    <name type="common">Chimpanzee</name>
    <dbReference type="NCBI Taxonomy" id="9598"/>
    <lineage>
        <taxon>Eukaryota</taxon>
        <taxon>Metazoa</taxon>
        <taxon>Chordata</taxon>
        <taxon>Craniata</taxon>
        <taxon>Vertebrata</taxon>
        <taxon>Euteleostomi</taxon>
        <taxon>Mammalia</taxon>
        <taxon>Eutheria</taxon>
        <taxon>Euarchontoglires</taxon>
        <taxon>Primates</taxon>
        <taxon>Haplorrhini</taxon>
        <taxon>Catarrhini</taxon>
        <taxon>Hominidae</taxon>
        <taxon>Pan</taxon>
    </lineage>
</organism>